<name>PSBN2_MICAN</name>
<feature type="chain" id="PRO_0000362168" description="Protein PsbN 2">
    <location>
        <begin position="1"/>
        <end position="43"/>
    </location>
</feature>
<feature type="transmembrane region" description="Helical" evidence="1">
    <location>
        <begin position="4"/>
        <end position="24"/>
    </location>
</feature>
<organism>
    <name type="scientific">Microcystis aeruginosa (strain NIES-843 / IAM M-2473)</name>
    <dbReference type="NCBI Taxonomy" id="449447"/>
    <lineage>
        <taxon>Bacteria</taxon>
        <taxon>Bacillati</taxon>
        <taxon>Cyanobacteriota</taxon>
        <taxon>Cyanophyceae</taxon>
        <taxon>Oscillatoriophycideae</taxon>
        <taxon>Chroococcales</taxon>
        <taxon>Microcystaceae</taxon>
        <taxon>Microcystis</taxon>
    </lineage>
</organism>
<dbReference type="EMBL" id="AP009552">
    <property type="protein sequence ID" value="BAG03477.1"/>
    <property type="molecule type" value="Genomic_DNA"/>
</dbReference>
<dbReference type="STRING" id="449447.MAE_36550"/>
<dbReference type="PaxDb" id="449447-MAE_36550"/>
<dbReference type="EnsemblBacteria" id="BAG03477">
    <property type="protein sequence ID" value="BAG03477"/>
    <property type="gene ID" value="MAE_36550"/>
</dbReference>
<dbReference type="KEGG" id="mar:MAE_36550"/>
<dbReference type="HOGENOM" id="CLU_205504_0_0_3"/>
<dbReference type="BioCyc" id="MAER449447:MAE_RS15820-MONOMER"/>
<dbReference type="Proteomes" id="UP000001510">
    <property type="component" value="Chromosome"/>
</dbReference>
<dbReference type="GO" id="GO:0031676">
    <property type="term" value="C:plasma membrane-derived thylakoid membrane"/>
    <property type="evidence" value="ECO:0007669"/>
    <property type="project" value="UniProtKB-SubCell"/>
</dbReference>
<dbReference type="GO" id="GO:0015979">
    <property type="term" value="P:photosynthesis"/>
    <property type="evidence" value="ECO:0007669"/>
    <property type="project" value="InterPro"/>
</dbReference>
<dbReference type="HAMAP" id="MF_00293">
    <property type="entry name" value="PSII_PsbN"/>
    <property type="match status" value="1"/>
</dbReference>
<dbReference type="InterPro" id="IPR003398">
    <property type="entry name" value="PSII_PsbN"/>
</dbReference>
<dbReference type="NCBIfam" id="NF009650">
    <property type="entry name" value="PRK13183.1"/>
    <property type="match status" value="1"/>
</dbReference>
<dbReference type="PANTHER" id="PTHR35326">
    <property type="entry name" value="PROTEIN PSBN"/>
    <property type="match status" value="1"/>
</dbReference>
<dbReference type="PANTHER" id="PTHR35326:SF3">
    <property type="entry name" value="PROTEIN PSBN"/>
    <property type="match status" value="1"/>
</dbReference>
<dbReference type="Pfam" id="PF02468">
    <property type="entry name" value="PsbN"/>
    <property type="match status" value="1"/>
</dbReference>
<comment type="function">
    <text evidence="1">May play a role in photosystem I and II biogenesis.</text>
</comment>
<comment type="subcellular location">
    <subcellularLocation>
        <location evidence="1">Cellular thylakoid membrane</location>
        <topology evidence="1">Single-pass membrane protein</topology>
    </subcellularLocation>
</comment>
<comment type="similarity">
    <text evidence="1">Belongs to the PsbN family.</text>
</comment>
<comment type="caution">
    <text evidence="1">Originally thought to be a component of PSII; based on experiments in Synechocystis, N.tabacum and barley, and its absence from PSII in T.elongatus and T.vulcanus, this is probably not true.</text>
</comment>
<reference key="1">
    <citation type="journal article" date="2007" name="DNA Res.">
        <title>Complete genomic structure of the bloom-forming toxic cyanobacterium Microcystis aeruginosa NIES-843.</title>
        <authorList>
            <person name="Kaneko T."/>
            <person name="Nakajima N."/>
            <person name="Okamoto S."/>
            <person name="Suzuki I."/>
            <person name="Tanabe Y."/>
            <person name="Tamaoki M."/>
            <person name="Nakamura Y."/>
            <person name="Kasai F."/>
            <person name="Watanabe A."/>
            <person name="Kawashima K."/>
            <person name="Kishida Y."/>
            <person name="Ono A."/>
            <person name="Shimizu Y."/>
            <person name="Takahashi C."/>
            <person name="Minami C."/>
            <person name="Fujishiro T."/>
            <person name="Kohara M."/>
            <person name="Katoh M."/>
            <person name="Nakazaki N."/>
            <person name="Nakayama S."/>
            <person name="Yamada M."/>
            <person name="Tabata S."/>
            <person name="Watanabe M.M."/>
        </authorList>
    </citation>
    <scope>NUCLEOTIDE SEQUENCE [LARGE SCALE GENOMIC DNA]</scope>
    <source>
        <strain>NIES-843 / IAM M-247</strain>
    </source>
</reference>
<gene>
    <name evidence="1" type="primary">psbN2</name>
    <name type="ordered locus">MAE_36550</name>
</gene>
<sequence>METATILGISIAAALVGITVLALYTAFGPPAAELSDPFEDHED</sequence>
<accession>B0JNP7</accession>
<proteinExistence type="inferred from homology"/>
<protein>
    <recommendedName>
        <fullName evidence="1">Protein PsbN 2</fullName>
    </recommendedName>
</protein>
<keyword id="KW-0472">Membrane</keyword>
<keyword id="KW-0793">Thylakoid</keyword>
<keyword id="KW-0812">Transmembrane</keyword>
<keyword id="KW-1133">Transmembrane helix</keyword>
<evidence type="ECO:0000255" key="1">
    <source>
        <dbReference type="HAMAP-Rule" id="MF_00293"/>
    </source>
</evidence>